<organism>
    <name type="scientific">Xanthomonas campestris pv. campestris (strain B100)</name>
    <dbReference type="NCBI Taxonomy" id="509169"/>
    <lineage>
        <taxon>Bacteria</taxon>
        <taxon>Pseudomonadati</taxon>
        <taxon>Pseudomonadota</taxon>
        <taxon>Gammaproteobacteria</taxon>
        <taxon>Lysobacterales</taxon>
        <taxon>Lysobacteraceae</taxon>
        <taxon>Xanthomonas</taxon>
    </lineage>
</organism>
<dbReference type="EMBL" id="AM920689">
    <property type="protein sequence ID" value="CAP51337.1"/>
    <property type="molecule type" value="Genomic_DNA"/>
</dbReference>
<dbReference type="SMR" id="B0RSA2"/>
<dbReference type="KEGG" id="xca:xcc-b100_1984"/>
<dbReference type="HOGENOM" id="CLU_135723_3_3_6"/>
<dbReference type="Proteomes" id="UP000001188">
    <property type="component" value="Chromosome"/>
</dbReference>
<dbReference type="GO" id="GO:1990904">
    <property type="term" value="C:ribonucleoprotein complex"/>
    <property type="evidence" value="ECO:0007669"/>
    <property type="project" value="UniProtKB-KW"/>
</dbReference>
<dbReference type="GO" id="GO:0005840">
    <property type="term" value="C:ribosome"/>
    <property type="evidence" value="ECO:0007669"/>
    <property type="project" value="UniProtKB-KW"/>
</dbReference>
<dbReference type="GO" id="GO:0003735">
    <property type="term" value="F:structural constituent of ribosome"/>
    <property type="evidence" value="ECO:0007669"/>
    <property type="project" value="InterPro"/>
</dbReference>
<dbReference type="GO" id="GO:0006412">
    <property type="term" value="P:translation"/>
    <property type="evidence" value="ECO:0007669"/>
    <property type="project" value="UniProtKB-UniRule"/>
</dbReference>
<dbReference type="HAMAP" id="MF_00251">
    <property type="entry name" value="Ribosomal_bL36"/>
    <property type="match status" value="1"/>
</dbReference>
<dbReference type="InterPro" id="IPR000473">
    <property type="entry name" value="Ribosomal_bL36"/>
</dbReference>
<dbReference type="InterPro" id="IPR035977">
    <property type="entry name" value="Ribosomal_bL36_sp"/>
</dbReference>
<dbReference type="InterPro" id="IPR047621">
    <property type="entry name" value="Ribosomal_L36_bact"/>
</dbReference>
<dbReference type="NCBIfam" id="NF002021">
    <property type="entry name" value="PRK00831.1"/>
    <property type="match status" value="1"/>
</dbReference>
<dbReference type="NCBIfam" id="TIGR01022">
    <property type="entry name" value="rpmJ_bact"/>
    <property type="match status" value="1"/>
</dbReference>
<dbReference type="PANTHER" id="PTHR47781">
    <property type="entry name" value="50S RIBOSOMAL PROTEIN L36 2"/>
    <property type="match status" value="1"/>
</dbReference>
<dbReference type="PANTHER" id="PTHR47781:SF1">
    <property type="entry name" value="LARGE RIBOSOMAL SUBUNIT PROTEIN BL36B"/>
    <property type="match status" value="1"/>
</dbReference>
<dbReference type="Pfam" id="PF00444">
    <property type="entry name" value="Ribosomal_L36"/>
    <property type="match status" value="1"/>
</dbReference>
<dbReference type="SUPFAM" id="SSF57840">
    <property type="entry name" value="Ribosomal protein L36"/>
    <property type="match status" value="1"/>
</dbReference>
<dbReference type="PROSITE" id="PS00828">
    <property type="entry name" value="RIBOSOMAL_L36"/>
    <property type="match status" value="1"/>
</dbReference>
<evidence type="ECO:0000255" key="1">
    <source>
        <dbReference type="HAMAP-Rule" id="MF_00251"/>
    </source>
</evidence>
<evidence type="ECO:0000305" key="2"/>
<accession>B0RSA2</accession>
<reference key="1">
    <citation type="journal article" date="2008" name="J. Biotechnol.">
        <title>The genome of Xanthomonas campestris pv. campestris B100 and its use for the reconstruction of metabolic pathways involved in xanthan biosynthesis.</title>
        <authorList>
            <person name="Vorhoelter F.-J."/>
            <person name="Schneiker S."/>
            <person name="Goesmann A."/>
            <person name="Krause L."/>
            <person name="Bekel T."/>
            <person name="Kaiser O."/>
            <person name="Linke B."/>
            <person name="Patschkowski T."/>
            <person name="Rueckert C."/>
            <person name="Schmid J."/>
            <person name="Sidhu V.K."/>
            <person name="Sieber V."/>
            <person name="Tauch A."/>
            <person name="Watt S.A."/>
            <person name="Weisshaar B."/>
            <person name="Becker A."/>
            <person name="Niehaus K."/>
            <person name="Puehler A."/>
        </authorList>
    </citation>
    <scope>NUCLEOTIDE SEQUENCE [LARGE SCALE GENOMIC DNA]</scope>
    <source>
        <strain>B100</strain>
    </source>
</reference>
<comment type="similarity">
    <text evidence="1">Belongs to the bacterial ribosomal protein bL36 family.</text>
</comment>
<gene>
    <name evidence="1" type="primary">rpmJ</name>
    <name type="ordered locus">xcc-b100_1984</name>
</gene>
<feature type="chain" id="PRO_1000101083" description="Large ribosomal subunit protein bL36">
    <location>
        <begin position="1"/>
        <end position="41"/>
    </location>
</feature>
<protein>
    <recommendedName>
        <fullName evidence="1">Large ribosomal subunit protein bL36</fullName>
    </recommendedName>
    <alternativeName>
        <fullName evidence="2">50S ribosomal protein L36</fullName>
    </alternativeName>
</protein>
<keyword id="KW-0687">Ribonucleoprotein</keyword>
<keyword id="KW-0689">Ribosomal protein</keyword>
<name>RL36_XANCB</name>
<proteinExistence type="inferred from homology"/>
<sequence length="41" mass="4872">MKVLSSLKSAKTRHRDCKVVRRRGKVFVICKSNPRFKARQR</sequence>